<feature type="chain" id="PRO_0000275148" description="NADH-ubiquinone oxidoreductase chain 4L">
    <location>
        <begin position="1"/>
        <end position="98"/>
    </location>
</feature>
<feature type="transmembrane region" description="Helical" evidence="3">
    <location>
        <begin position="2"/>
        <end position="22"/>
    </location>
</feature>
<feature type="transmembrane region" description="Helical" evidence="3">
    <location>
        <begin position="37"/>
        <end position="57"/>
    </location>
</feature>
<feature type="transmembrane region" description="Helical" evidence="3">
    <location>
        <begin position="61"/>
        <end position="81"/>
    </location>
</feature>
<feature type="sequence variant" description="In strain: Isolate JP132.">
    <original>S</original>
    <variation>A</variation>
    <location>
        <position position="39"/>
    </location>
</feature>
<proteinExistence type="inferred from homology"/>
<comment type="function">
    <text evidence="1">Core subunit of the mitochondrial membrane respiratory chain NADH dehydrogenase (Complex I) which catalyzes electron transfer from NADH through the respiratory chain, using ubiquinone as an electron acceptor. Part of the enzyme membrane arm which is embedded in the lipid bilayer and involved in proton translocation.</text>
</comment>
<comment type="catalytic activity">
    <reaction evidence="1">
        <text>a ubiquinone + NADH + 5 H(+)(in) = a ubiquinol + NAD(+) + 4 H(+)(out)</text>
        <dbReference type="Rhea" id="RHEA:29091"/>
        <dbReference type="Rhea" id="RHEA-COMP:9565"/>
        <dbReference type="Rhea" id="RHEA-COMP:9566"/>
        <dbReference type="ChEBI" id="CHEBI:15378"/>
        <dbReference type="ChEBI" id="CHEBI:16389"/>
        <dbReference type="ChEBI" id="CHEBI:17976"/>
        <dbReference type="ChEBI" id="CHEBI:57540"/>
        <dbReference type="ChEBI" id="CHEBI:57945"/>
        <dbReference type="EC" id="7.1.1.2"/>
    </reaction>
    <physiologicalReaction direction="left-to-right" evidence="1">
        <dbReference type="Rhea" id="RHEA:29092"/>
    </physiologicalReaction>
</comment>
<comment type="subunit">
    <text evidence="2">Core subunit of respiratory chain NADH dehydrogenase (Complex I) which is composed of 45 different subunits.</text>
</comment>
<comment type="subcellular location">
    <subcellularLocation>
        <location evidence="2">Mitochondrion inner membrane</location>
        <topology evidence="3">Multi-pass membrane protein</topology>
    </subcellularLocation>
</comment>
<comment type="similarity">
    <text evidence="4">Belongs to the complex I subunit 4L family.</text>
</comment>
<dbReference type="EC" id="7.1.1.2"/>
<dbReference type="EMBL" id="AF224585">
    <property type="protein sequence ID" value="AAN64791.1"/>
    <property type="molecule type" value="Genomic_DNA"/>
</dbReference>
<dbReference type="EMBL" id="AF224586">
    <property type="protein sequence ID" value="AAN64795.1"/>
    <property type="molecule type" value="Genomic_DNA"/>
</dbReference>
<dbReference type="EMBL" id="AF224587">
    <property type="protein sequence ID" value="AAN64799.1"/>
    <property type="molecule type" value="Genomic_DNA"/>
</dbReference>
<dbReference type="EMBL" id="AY582555">
    <property type="protein sequence ID" value="AAT35883.1"/>
    <property type="molecule type" value="Genomic_DNA"/>
</dbReference>
<dbReference type="RefSeq" id="YP_002929459.1">
    <property type="nucleotide sequence ID" value="NC_012773.1"/>
</dbReference>
<dbReference type="SMR" id="Q8HBG1"/>
<dbReference type="GeneID" id="7944456"/>
<dbReference type="CTD" id="4539"/>
<dbReference type="GO" id="GO:0005743">
    <property type="term" value="C:mitochondrial inner membrane"/>
    <property type="evidence" value="ECO:0000250"/>
    <property type="project" value="UniProtKB"/>
</dbReference>
<dbReference type="GO" id="GO:0045271">
    <property type="term" value="C:respiratory chain complex I"/>
    <property type="evidence" value="ECO:0000250"/>
    <property type="project" value="UniProtKB"/>
</dbReference>
<dbReference type="GO" id="GO:0008137">
    <property type="term" value="F:NADH dehydrogenase (ubiquinone) activity"/>
    <property type="evidence" value="ECO:0000250"/>
    <property type="project" value="UniProtKB"/>
</dbReference>
<dbReference type="GO" id="GO:0042773">
    <property type="term" value="P:ATP synthesis coupled electron transport"/>
    <property type="evidence" value="ECO:0007669"/>
    <property type="project" value="InterPro"/>
</dbReference>
<dbReference type="FunFam" id="1.10.287.3510:FF:000002">
    <property type="entry name" value="NADH-ubiquinone oxidoreductase chain 4L"/>
    <property type="match status" value="1"/>
</dbReference>
<dbReference type="Gene3D" id="1.10.287.3510">
    <property type="match status" value="1"/>
</dbReference>
<dbReference type="InterPro" id="IPR001133">
    <property type="entry name" value="NADH_UbQ_OxRdtase_chain4L/K"/>
</dbReference>
<dbReference type="InterPro" id="IPR039428">
    <property type="entry name" value="NUOK/Mnh_C1-like"/>
</dbReference>
<dbReference type="PANTHER" id="PTHR11434:SF0">
    <property type="entry name" value="NADH-UBIQUINONE OXIDOREDUCTASE CHAIN 4L"/>
    <property type="match status" value="1"/>
</dbReference>
<dbReference type="PANTHER" id="PTHR11434">
    <property type="entry name" value="NADH-UBIQUINONE OXIDOREDUCTASE SUBUNIT ND4L"/>
    <property type="match status" value="1"/>
</dbReference>
<dbReference type="Pfam" id="PF00420">
    <property type="entry name" value="Oxidored_q2"/>
    <property type="match status" value="1"/>
</dbReference>
<organism>
    <name type="scientific">Varecia variegata variegata</name>
    <name type="common">Black and white ruffed lemur</name>
    <dbReference type="NCBI Taxonomy" id="87289"/>
    <lineage>
        <taxon>Eukaryota</taxon>
        <taxon>Metazoa</taxon>
        <taxon>Chordata</taxon>
        <taxon>Craniata</taxon>
        <taxon>Vertebrata</taxon>
        <taxon>Euteleostomi</taxon>
        <taxon>Mammalia</taxon>
        <taxon>Eutheria</taxon>
        <taxon>Euarchontoglires</taxon>
        <taxon>Primates</taxon>
        <taxon>Strepsirrhini</taxon>
        <taxon>Lemuriformes</taxon>
        <taxon>Lemuridae</taxon>
        <taxon>Varecia</taxon>
    </lineage>
</organism>
<gene>
    <name type="primary">MT-ND4L</name>
    <name type="synonym">MTND4L</name>
    <name type="synonym">NADH4L</name>
    <name type="synonym">ND4L</name>
</gene>
<accession>Q8HBG1</accession>
<accession>Q8HQ95</accession>
<evidence type="ECO:0000250" key="1">
    <source>
        <dbReference type="UniProtKB" id="P03901"/>
    </source>
</evidence>
<evidence type="ECO:0000250" key="2">
    <source>
        <dbReference type="UniProtKB" id="P03902"/>
    </source>
</evidence>
<evidence type="ECO:0000255" key="3"/>
<evidence type="ECO:0000305" key="4"/>
<name>NU4LM_VARVV</name>
<sequence length="98" mass="10830">MPSIFINIILAFIIALLGMLIFRSHLMSSLLCLESMMLSMFILSTLTILSLHLTMSFMMPILLLVFAACEAAVGLALLVTVSNTYGLDYIQNLNLLQC</sequence>
<keyword id="KW-0249">Electron transport</keyword>
<keyword id="KW-0472">Membrane</keyword>
<keyword id="KW-0496">Mitochondrion</keyword>
<keyword id="KW-0999">Mitochondrion inner membrane</keyword>
<keyword id="KW-0520">NAD</keyword>
<keyword id="KW-0679">Respiratory chain</keyword>
<keyword id="KW-1278">Translocase</keyword>
<keyword id="KW-0812">Transmembrane</keyword>
<keyword id="KW-1133">Transmembrane helix</keyword>
<keyword id="KW-0813">Transport</keyword>
<keyword id="KW-0830">Ubiquinone</keyword>
<protein>
    <recommendedName>
        <fullName>NADH-ubiquinone oxidoreductase chain 4L</fullName>
        <ecNumber>7.1.1.2</ecNumber>
    </recommendedName>
    <alternativeName>
        <fullName>NADH dehydrogenase subunit 4L</fullName>
    </alternativeName>
</protein>
<geneLocation type="mitochondrion"/>
<reference key="1">
    <citation type="journal article" date="2003" name="Proc. Natl. Acad. Sci. U.S.A.">
        <title>A molecular approach to comparative phylogeography of extant Malagasy lemurs.</title>
        <authorList>
            <person name="Pastorini J."/>
            <person name="Thalmann U."/>
            <person name="Martin R.D."/>
        </authorList>
    </citation>
    <scope>NUCLEOTIDE SEQUENCE [GENOMIC DNA]</scope>
    <source>
        <strain>Isolate JP131</strain>
        <strain>Isolate JP132</strain>
        <strain>Isolate JP30</strain>
    </source>
</reference>
<reference key="2">
    <citation type="journal article" date="2006" name="Int. J. Primatol.">
        <title>Revision of the mouse lemurs (Microcebus) of Eastern Madagascar.</title>
        <authorList>
            <person name="Louis E.E. Jr."/>
            <person name="Coles M.S."/>
            <person name="Andriantompohavana R."/>
            <person name="Sommer J.A."/>
            <person name="Engberg S.E."/>
            <person name="Zaonarivelo J.R."/>
            <person name="Mayor M.I."/>
            <person name="Brenneman R.A."/>
        </authorList>
    </citation>
    <scope>NUCLEOTIDE SEQUENCE [GENOMIC DNA]</scope>
    <source>
        <strain>Isolate FAN21</strain>
    </source>
</reference>